<evidence type="ECO:0000255" key="1">
    <source>
        <dbReference type="HAMAP-Rule" id="MF_00281"/>
    </source>
</evidence>
<protein>
    <recommendedName>
        <fullName evidence="1">Phenylalanine--tRNA ligase alpha subunit</fullName>
        <ecNumber evidence="1">6.1.1.20</ecNumber>
    </recommendedName>
    <alternativeName>
        <fullName evidence="1">Phenylalanyl-tRNA synthetase alpha subunit</fullName>
        <shortName evidence="1">PheRS</shortName>
    </alternativeName>
</protein>
<gene>
    <name evidence="1" type="primary">pheS</name>
    <name type="ordered locus">Deide_20900</name>
</gene>
<comment type="catalytic activity">
    <reaction evidence="1">
        <text>tRNA(Phe) + L-phenylalanine + ATP = L-phenylalanyl-tRNA(Phe) + AMP + diphosphate + H(+)</text>
        <dbReference type="Rhea" id="RHEA:19413"/>
        <dbReference type="Rhea" id="RHEA-COMP:9668"/>
        <dbReference type="Rhea" id="RHEA-COMP:9699"/>
        <dbReference type="ChEBI" id="CHEBI:15378"/>
        <dbReference type="ChEBI" id="CHEBI:30616"/>
        <dbReference type="ChEBI" id="CHEBI:33019"/>
        <dbReference type="ChEBI" id="CHEBI:58095"/>
        <dbReference type="ChEBI" id="CHEBI:78442"/>
        <dbReference type="ChEBI" id="CHEBI:78531"/>
        <dbReference type="ChEBI" id="CHEBI:456215"/>
        <dbReference type="EC" id="6.1.1.20"/>
    </reaction>
</comment>
<comment type="cofactor">
    <cofactor evidence="1">
        <name>Mg(2+)</name>
        <dbReference type="ChEBI" id="CHEBI:18420"/>
    </cofactor>
    <text evidence="1">Binds 2 magnesium ions per tetramer.</text>
</comment>
<comment type="subunit">
    <text evidence="1">Tetramer of two alpha and two beta subunits.</text>
</comment>
<comment type="subcellular location">
    <subcellularLocation>
        <location evidence="1">Cytoplasm</location>
    </subcellularLocation>
</comment>
<comment type="similarity">
    <text evidence="1">Belongs to the class-II aminoacyl-tRNA synthetase family. Phe-tRNA synthetase alpha subunit type 1 subfamily.</text>
</comment>
<feature type="chain" id="PRO_1000204822" description="Phenylalanine--tRNA ligase alpha subunit">
    <location>
        <begin position="1"/>
        <end position="339"/>
    </location>
</feature>
<feature type="binding site" evidence="1">
    <location>
        <position position="247"/>
    </location>
    <ligand>
        <name>Mg(2+)</name>
        <dbReference type="ChEBI" id="CHEBI:18420"/>
        <note>shared with beta subunit</note>
    </ligand>
</feature>
<sequence length="339" mass="37833">MQQQAISEIQAAETLDALQAVKTKYVGKSGLVTRELGSLGKLPPEERKARGAEINTVRQAIDAALTEREGVLKRAALDARLASEAIDVTLPGLPLPAGGLHPINRVYEDLTGIYERMGYAVIEGPEVEDEHHNFEALNVPWYHPARDLQDTFWLEDGRLLRTHTSPMQIRYMVDHEPPLKIVVRGKVYRYEATDATHEAMFHQLEGLVVGDGISMADLKGTIAEMARGLYGPSAKVRFQPSYYPFVEPGADFAVWWDNPRGESKWLELGGCGMVHPNVFRAVDDLREAQGKPRIYEGKTGFAFGLGPERIAMLKYGIPDIRYFYANDPRVIGQFRGELG</sequence>
<reference key="1">
    <citation type="journal article" date="2009" name="PLoS Genet.">
        <title>Alliance of proteomics and genomics to unravel the specificities of Sahara bacterium Deinococcus deserti.</title>
        <authorList>
            <person name="de Groot A."/>
            <person name="Dulermo R."/>
            <person name="Ortet P."/>
            <person name="Blanchard L."/>
            <person name="Guerin P."/>
            <person name="Fernandez B."/>
            <person name="Vacherie B."/>
            <person name="Dossat C."/>
            <person name="Jolivet E."/>
            <person name="Siguier P."/>
            <person name="Chandler M."/>
            <person name="Barakat M."/>
            <person name="Dedieu A."/>
            <person name="Barbe V."/>
            <person name="Heulin T."/>
            <person name="Sommer S."/>
            <person name="Achouak W."/>
            <person name="Armengaud J."/>
        </authorList>
    </citation>
    <scope>NUCLEOTIDE SEQUENCE [LARGE SCALE GENOMIC DNA]</scope>
    <source>
        <strain>DSM 17065 / CIP 109153 / LMG 22923 / VCD115</strain>
    </source>
</reference>
<proteinExistence type="inferred from homology"/>
<organism>
    <name type="scientific">Deinococcus deserti (strain DSM 17065 / CIP 109153 / LMG 22923 / VCD115)</name>
    <dbReference type="NCBI Taxonomy" id="546414"/>
    <lineage>
        <taxon>Bacteria</taxon>
        <taxon>Thermotogati</taxon>
        <taxon>Deinococcota</taxon>
        <taxon>Deinococci</taxon>
        <taxon>Deinococcales</taxon>
        <taxon>Deinococcaceae</taxon>
        <taxon>Deinococcus</taxon>
    </lineage>
</organism>
<name>SYFA_DEIDV</name>
<dbReference type="EC" id="6.1.1.20" evidence="1"/>
<dbReference type="EMBL" id="CP001114">
    <property type="protein sequence ID" value="ACO47115.1"/>
    <property type="molecule type" value="Genomic_DNA"/>
</dbReference>
<dbReference type="RefSeq" id="WP_012694236.1">
    <property type="nucleotide sequence ID" value="NC_012526.1"/>
</dbReference>
<dbReference type="SMR" id="C1CYT5"/>
<dbReference type="STRING" id="546414.Deide_20900"/>
<dbReference type="PaxDb" id="546414-Deide_20900"/>
<dbReference type="KEGG" id="ddr:Deide_20900"/>
<dbReference type="eggNOG" id="COG0016">
    <property type="taxonomic scope" value="Bacteria"/>
</dbReference>
<dbReference type="HOGENOM" id="CLU_025086_0_1_0"/>
<dbReference type="OrthoDB" id="9800719at2"/>
<dbReference type="Proteomes" id="UP000002208">
    <property type="component" value="Chromosome"/>
</dbReference>
<dbReference type="GO" id="GO:0005737">
    <property type="term" value="C:cytoplasm"/>
    <property type="evidence" value="ECO:0007669"/>
    <property type="project" value="UniProtKB-SubCell"/>
</dbReference>
<dbReference type="GO" id="GO:0005524">
    <property type="term" value="F:ATP binding"/>
    <property type="evidence" value="ECO:0007669"/>
    <property type="project" value="UniProtKB-UniRule"/>
</dbReference>
<dbReference type="GO" id="GO:0000287">
    <property type="term" value="F:magnesium ion binding"/>
    <property type="evidence" value="ECO:0007669"/>
    <property type="project" value="UniProtKB-UniRule"/>
</dbReference>
<dbReference type="GO" id="GO:0004826">
    <property type="term" value="F:phenylalanine-tRNA ligase activity"/>
    <property type="evidence" value="ECO:0007669"/>
    <property type="project" value="UniProtKB-UniRule"/>
</dbReference>
<dbReference type="GO" id="GO:0000049">
    <property type="term" value="F:tRNA binding"/>
    <property type="evidence" value="ECO:0007669"/>
    <property type="project" value="InterPro"/>
</dbReference>
<dbReference type="GO" id="GO:0006432">
    <property type="term" value="P:phenylalanyl-tRNA aminoacylation"/>
    <property type="evidence" value="ECO:0007669"/>
    <property type="project" value="UniProtKB-UniRule"/>
</dbReference>
<dbReference type="CDD" id="cd00496">
    <property type="entry name" value="PheRS_alpha_core"/>
    <property type="match status" value="1"/>
</dbReference>
<dbReference type="Gene3D" id="3.30.930.10">
    <property type="entry name" value="Bira Bifunctional Protein, Domain 2"/>
    <property type="match status" value="1"/>
</dbReference>
<dbReference type="HAMAP" id="MF_00281">
    <property type="entry name" value="Phe_tRNA_synth_alpha1"/>
    <property type="match status" value="1"/>
</dbReference>
<dbReference type="InterPro" id="IPR006195">
    <property type="entry name" value="aa-tRNA-synth_II"/>
</dbReference>
<dbReference type="InterPro" id="IPR045864">
    <property type="entry name" value="aa-tRNA-synth_II/BPL/LPL"/>
</dbReference>
<dbReference type="InterPro" id="IPR004529">
    <property type="entry name" value="Phe-tRNA-synth_IIc_asu"/>
</dbReference>
<dbReference type="InterPro" id="IPR004188">
    <property type="entry name" value="Phe-tRNA_ligase_II_N"/>
</dbReference>
<dbReference type="InterPro" id="IPR022911">
    <property type="entry name" value="Phe_tRNA_ligase_alpha1_bac"/>
</dbReference>
<dbReference type="InterPro" id="IPR002319">
    <property type="entry name" value="Phenylalanyl-tRNA_Synthase"/>
</dbReference>
<dbReference type="InterPro" id="IPR010978">
    <property type="entry name" value="tRNA-bd_arm"/>
</dbReference>
<dbReference type="NCBIfam" id="TIGR00468">
    <property type="entry name" value="pheS"/>
    <property type="match status" value="1"/>
</dbReference>
<dbReference type="PANTHER" id="PTHR11538:SF41">
    <property type="entry name" value="PHENYLALANINE--TRNA LIGASE, MITOCHONDRIAL"/>
    <property type="match status" value="1"/>
</dbReference>
<dbReference type="PANTHER" id="PTHR11538">
    <property type="entry name" value="PHENYLALANYL-TRNA SYNTHETASE"/>
    <property type="match status" value="1"/>
</dbReference>
<dbReference type="Pfam" id="PF02912">
    <property type="entry name" value="Phe_tRNA-synt_N"/>
    <property type="match status" value="1"/>
</dbReference>
<dbReference type="Pfam" id="PF01409">
    <property type="entry name" value="tRNA-synt_2d"/>
    <property type="match status" value="1"/>
</dbReference>
<dbReference type="SUPFAM" id="SSF55681">
    <property type="entry name" value="Class II aaRS and biotin synthetases"/>
    <property type="match status" value="1"/>
</dbReference>
<dbReference type="SUPFAM" id="SSF46589">
    <property type="entry name" value="tRNA-binding arm"/>
    <property type="match status" value="1"/>
</dbReference>
<dbReference type="PROSITE" id="PS50862">
    <property type="entry name" value="AA_TRNA_LIGASE_II"/>
    <property type="match status" value="1"/>
</dbReference>
<accession>C1CYT5</accession>
<keyword id="KW-0030">Aminoacyl-tRNA synthetase</keyword>
<keyword id="KW-0067">ATP-binding</keyword>
<keyword id="KW-0963">Cytoplasm</keyword>
<keyword id="KW-0436">Ligase</keyword>
<keyword id="KW-0460">Magnesium</keyword>
<keyword id="KW-0479">Metal-binding</keyword>
<keyword id="KW-0547">Nucleotide-binding</keyword>
<keyword id="KW-0648">Protein biosynthesis</keyword>
<keyword id="KW-1185">Reference proteome</keyword>